<proteinExistence type="inferred from homology"/>
<feature type="chain" id="PRO_1000116825" description="Serine hydroxymethyltransferase">
    <location>
        <begin position="1"/>
        <end position="425"/>
    </location>
</feature>
<feature type="binding site" evidence="1">
    <location>
        <position position="122"/>
    </location>
    <ligand>
        <name>(6S)-5,6,7,8-tetrahydrofolate</name>
        <dbReference type="ChEBI" id="CHEBI:57453"/>
    </ligand>
</feature>
<feature type="binding site" evidence="1">
    <location>
        <begin position="126"/>
        <end position="128"/>
    </location>
    <ligand>
        <name>(6S)-5,6,7,8-tetrahydrofolate</name>
        <dbReference type="ChEBI" id="CHEBI:57453"/>
    </ligand>
</feature>
<feature type="binding site" evidence="1">
    <location>
        <begin position="355"/>
        <end position="357"/>
    </location>
    <ligand>
        <name>(6S)-5,6,7,8-tetrahydrofolate</name>
        <dbReference type="ChEBI" id="CHEBI:57453"/>
    </ligand>
</feature>
<feature type="site" description="Plays an important role in substrate specificity" evidence="1">
    <location>
        <position position="230"/>
    </location>
</feature>
<feature type="modified residue" description="N6-(pyridoxal phosphate)lysine" evidence="1">
    <location>
        <position position="231"/>
    </location>
</feature>
<keyword id="KW-0028">Amino-acid biosynthesis</keyword>
<keyword id="KW-0963">Cytoplasm</keyword>
<keyword id="KW-0554">One-carbon metabolism</keyword>
<keyword id="KW-0663">Pyridoxal phosphate</keyword>
<keyword id="KW-1185">Reference proteome</keyword>
<keyword id="KW-0808">Transferase</keyword>
<gene>
    <name evidence="1" type="primary">glyA</name>
    <name type="ordered locus">PCC8801_0756</name>
</gene>
<name>GLYA_RIPO1</name>
<dbReference type="EC" id="2.1.2.1" evidence="1"/>
<dbReference type="EMBL" id="CP001287">
    <property type="protein sequence ID" value="ACK64839.1"/>
    <property type="molecule type" value="Genomic_DNA"/>
</dbReference>
<dbReference type="RefSeq" id="WP_012594115.1">
    <property type="nucleotide sequence ID" value="NC_011726.1"/>
</dbReference>
<dbReference type="SMR" id="B7JYG9"/>
<dbReference type="STRING" id="41431.PCC8801_0756"/>
<dbReference type="KEGG" id="cyp:PCC8801_0756"/>
<dbReference type="eggNOG" id="COG0112">
    <property type="taxonomic scope" value="Bacteria"/>
</dbReference>
<dbReference type="HOGENOM" id="CLU_022477_2_1_3"/>
<dbReference type="OrthoDB" id="9803846at2"/>
<dbReference type="UniPathway" id="UPA00193"/>
<dbReference type="UniPathway" id="UPA00288">
    <property type="reaction ID" value="UER01023"/>
</dbReference>
<dbReference type="Proteomes" id="UP000008204">
    <property type="component" value="Chromosome"/>
</dbReference>
<dbReference type="GO" id="GO:0005829">
    <property type="term" value="C:cytosol"/>
    <property type="evidence" value="ECO:0007669"/>
    <property type="project" value="TreeGrafter"/>
</dbReference>
<dbReference type="GO" id="GO:0004372">
    <property type="term" value="F:glycine hydroxymethyltransferase activity"/>
    <property type="evidence" value="ECO:0007669"/>
    <property type="project" value="UniProtKB-UniRule"/>
</dbReference>
<dbReference type="GO" id="GO:0030170">
    <property type="term" value="F:pyridoxal phosphate binding"/>
    <property type="evidence" value="ECO:0007669"/>
    <property type="project" value="UniProtKB-UniRule"/>
</dbReference>
<dbReference type="GO" id="GO:0019264">
    <property type="term" value="P:glycine biosynthetic process from serine"/>
    <property type="evidence" value="ECO:0007669"/>
    <property type="project" value="UniProtKB-UniRule"/>
</dbReference>
<dbReference type="GO" id="GO:0035999">
    <property type="term" value="P:tetrahydrofolate interconversion"/>
    <property type="evidence" value="ECO:0007669"/>
    <property type="project" value="UniProtKB-UniRule"/>
</dbReference>
<dbReference type="CDD" id="cd00378">
    <property type="entry name" value="SHMT"/>
    <property type="match status" value="1"/>
</dbReference>
<dbReference type="FunFam" id="3.40.640.10:FF:000001">
    <property type="entry name" value="Serine hydroxymethyltransferase"/>
    <property type="match status" value="1"/>
</dbReference>
<dbReference type="FunFam" id="3.90.1150.10:FF:000003">
    <property type="entry name" value="Serine hydroxymethyltransferase"/>
    <property type="match status" value="1"/>
</dbReference>
<dbReference type="Gene3D" id="3.90.1150.10">
    <property type="entry name" value="Aspartate Aminotransferase, domain 1"/>
    <property type="match status" value="1"/>
</dbReference>
<dbReference type="Gene3D" id="3.40.640.10">
    <property type="entry name" value="Type I PLP-dependent aspartate aminotransferase-like (Major domain)"/>
    <property type="match status" value="1"/>
</dbReference>
<dbReference type="HAMAP" id="MF_00051">
    <property type="entry name" value="SHMT"/>
    <property type="match status" value="1"/>
</dbReference>
<dbReference type="InterPro" id="IPR015424">
    <property type="entry name" value="PyrdxlP-dep_Trfase"/>
</dbReference>
<dbReference type="InterPro" id="IPR015421">
    <property type="entry name" value="PyrdxlP-dep_Trfase_major"/>
</dbReference>
<dbReference type="InterPro" id="IPR015422">
    <property type="entry name" value="PyrdxlP-dep_Trfase_small"/>
</dbReference>
<dbReference type="InterPro" id="IPR001085">
    <property type="entry name" value="Ser_HO-MeTrfase"/>
</dbReference>
<dbReference type="InterPro" id="IPR049943">
    <property type="entry name" value="Ser_HO-MeTrfase-like"/>
</dbReference>
<dbReference type="InterPro" id="IPR019798">
    <property type="entry name" value="Ser_HO-MeTrfase_PLP_BS"/>
</dbReference>
<dbReference type="InterPro" id="IPR039429">
    <property type="entry name" value="SHMT-like_dom"/>
</dbReference>
<dbReference type="NCBIfam" id="NF000586">
    <property type="entry name" value="PRK00011.1"/>
    <property type="match status" value="1"/>
</dbReference>
<dbReference type="PANTHER" id="PTHR11680">
    <property type="entry name" value="SERINE HYDROXYMETHYLTRANSFERASE"/>
    <property type="match status" value="1"/>
</dbReference>
<dbReference type="PANTHER" id="PTHR11680:SF35">
    <property type="entry name" value="SERINE HYDROXYMETHYLTRANSFERASE 1"/>
    <property type="match status" value="1"/>
</dbReference>
<dbReference type="Pfam" id="PF00464">
    <property type="entry name" value="SHMT"/>
    <property type="match status" value="1"/>
</dbReference>
<dbReference type="PIRSF" id="PIRSF000412">
    <property type="entry name" value="SHMT"/>
    <property type="match status" value="1"/>
</dbReference>
<dbReference type="SUPFAM" id="SSF53383">
    <property type="entry name" value="PLP-dependent transferases"/>
    <property type="match status" value="1"/>
</dbReference>
<dbReference type="PROSITE" id="PS00096">
    <property type="entry name" value="SHMT"/>
    <property type="match status" value="1"/>
</dbReference>
<reference key="1">
    <citation type="journal article" date="2011" name="MBio">
        <title>Novel metabolic attributes of the genus Cyanothece, comprising a group of unicellular nitrogen-fixing Cyanobacteria.</title>
        <authorList>
            <person name="Bandyopadhyay A."/>
            <person name="Elvitigala T."/>
            <person name="Welsh E."/>
            <person name="Stockel J."/>
            <person name="Liberton M."/>
            <person name="Min H."/>
            <person name="Sherman L.A."/>
            <person name="Pakrasi H.B."/>
        </authorList>
    </citation>
    <scope>NUCLEOTIDE SEQUENCE [LARGE SCALE GENOMIC DNA]</scope>
    <source>
        <strain>PCC 8801 / RF-1</strain>
    </source>
</reference>
<sequence length="425" mass="46231">MPDNNLEILFQHDPAMAEIIQGELQRQRDHLELIASENFTSEAVLAAQGSVLTNKYAEGLPKKRYYGGCEYIDRAEQLAIDRAKELFGAAHANVQPHSGAQANFAVFLALLSPGDTIMGMDLSHGGHLTHGSPVNVSGKWFKVCHYGVNPDTERLDYDQIRELALKERPKLLICGYSAYPRIIEFDKFRAIADEIGAYLMADIAHIAGLVATGHHPSPISYCDVVTTTTHKTLRGPRGGLILTRDADLGKQFDKAVFPGTQGGPLEHVIAAKGVAFGEALKPQFKAYSGQVIANSRALAAQLMERGFKLVSGGTDNHLMLVDLRSIGMTGKEADRLVSEINITANKNTVPFDPESPFVTSGLRLGSPALTTRGMGESEFKEIGNIIADYLLSRGDEAVKHDCLGRVKSLCDRFPLYPGMKMAALV</sequence>
<organism>
    <name type="scientific">Rippkaea orientalis (strain PCC 8801 / RF-1)</name>
    <name type="common">Cyanothece sp. (strain PCC 8801)</name>
    <dbReference type="NCBI Taxonomy" id="41431"/>
    <lineage>
        <taxon>Bacteria</taxon>
        <taxon>Bacillati</taxon>
        <taxon>Cyanobacteriota</taxon>
        <taxon>Cyanophyceae</taxon>
        <taxon>Oscillatoriophycideae</taxon>
        <taxon>Chroococcales</taxon>
        <taxon>Aphanothecaceae</taxon>
        <taxon>Rippkaea</taxon>
        <taxon>Rippkaea orientalis</taxon>
    </lineage>
</organism>
<protein>
    <recommendedName>
        <fullName evidence="1">Serine hydroxymethyltransferase</fullName>
        <shortName evidence="1">SHMT</shortName>
        <shortName evidence="1">Serine methylase</shortName>
        <ecNumber evidence="1">2.1.2.1</ecNumber>
    </recommendedName>
</protein>
<comment type="function">
    <text evidence="1">Catalyzes the reversible interconversion of serine and glycine with tetrahydrofolate (THF) serving as the one-carbon carrier. This reaction serves as the major source of one-carbon groups required for the biosynthesis of purines, thymidylate, methionine, and other important biomolecules. Also exhibits THF-independent aldolase activity toward beta-hydroxyamino acids, producing glycine and aldehydes, via a retro-aldol mechanism.</text>
</comment>
<comment type="catalytic activity">
    <reaction evidence="1">
        <text>(6R)-5,10-methylene-5,6,7,8-tetrahydrofolate + glycine + H2O = (6S)-5,6,7,8-tetrahydrofolate + L-serine</text>
        <dbReference type="Rhea" id="RHEA:15481"/>
        <dbReference type="ChEBI" id="CHEBI:15377"/>
        <dbReference type="ChEBI" id="CHEBI:15636"/>
        <dbReference type="ChEBI" id="CHEBI:33384"/>
        <dbReference type="ChEBI" id="CHEBI:57305"/>
        <dbReference type="ChEBI" id="CHEBI:57453"/>
        <dbReference type="EC" id="2.1.2.1"/>
    </reaction>
</comment>
<comment type="cofactor">
    <cofactor evidence="1">
        <name>pyridoxal 5'-phosphate</name>
        <dbReference type="ChEBI" id="CHEBI:597326"/>
    </cofactor>
</comment>
<comment type="pathway">
    <text evidence="1">One-carbon metabolism; tetrahydrofolate interconversion.</text>
</comment>
<comment type="pathway">
    <text evidence="1">Amino-acid biosynthesis; glycine biosynthesis; glycine from L-serine: step 1/1.</text>
</comment>
<comment type="subunit">
    <text evidence="1">Homodimer.</text>
</comment>
<comment type="subcellular location">
    <subcellularLocation>
        <location evidence="1">Cytoplasm</location>
    </subcellularLocation>
</comment>
<comment type="similarity">
    <text evidence="1">Belongs to the SHMT family.</text>
</comment>
<accession>B7JYG9</accession>
<evidence type="ECO:0000255" key="1">
    <source>
        <dbReference type="HAMAP-Rule" id="MF_00051"/>
    </source>
</evidence>